<comment type="function">
    <text evidence="1">Could be a nuclease involved in processing of the 5'-end of pre-16S rRNA.</text>
</comment>
<comment type="subcellular location">
    <subcellularLocation>
        <location evidence="1">Cytoplasm</location>
    </subcellularLocation>
</comment>
<comment type="similarity">
    <text evidence="1">Belongs to the YqgF nuclease family.</text>
</comment>
<accession>Q5M292</accession>
<reference key="1">
    <citation type="journal article" date="2004" name="Nat. Biotechnol.">
        <title>Complete sequence and comparative genome analysis of the dairy bacterium Streptococcus thermophilus.</title>
        <authorList>
            <person name="Bolotin A."/>
            <person name="Quinquis B."/>
            <person name="Renault P."/>
            <person name="Sorokin A."/>
            <person name="Ehrlich S.D."/>
            <person name="Kulakauskas S."/>
            <person name="Lapidus A."/>
            <person name="Goltsman E."/>
            <person name="Mazur M."/>
            <person name="Pusch G.D."/>
            <person name="Fonstein M."/>
            <person name="Overbeek R."/>
            <person name="Kyprides N."/>
            <person name="Purnelle B."/>
            <person name="Prozzi D."/>
            <person name="Ngui K."/>
            <person name="Masuy D."/>
            <person name="Hancy F."/>
            <person name="Burteau S."/>
            <person name="Boutry M."/>
            <person name="Delcour J."/>
            <person name="Goffeau A."/>
            <person name="Hols P."/>
        </authorList>
    </citation>
    <scope>NUCLEOTIDE SEQUENCE [LARGE SCALE GENOMIC DNA]</scope>
    <source>
        <strain>ATCC BAA-250 / LMG 18311</strain>
    </source>
</reference>
<keyword id="KW-0963">Cytoplasm</keyword>
<keyword id="KW-0378">Hydrolase</keyword>
<keyword id="KW-0540">Nuclease</keyword>
<keyword id="KW-1185">Reference proteome</keyword>
<keyword id="KW-0690">Ribosome biogenesis</keyword>
<evidence type="ECO:0000255" key="1">
    <source>
        <dbReference type="HAMAP-Rule" id="MF_00651"/>
    </source>
</evidence>
<proteinExistence type="inferred from homology"/>
<protein>
    <recommendedName>
        <fullName evidence="1">Putative pre-16S rRNA nuclease</fullName>
        <ecNumber evidence="1">3.1.-.-</ecNumber>
    </recommendedName>
</protein>
<feature type="chain" id="PRO_0000172156" description="Putative pre-16S rRNA nuclease">
    <location>
        <begin position="1"/>
        <end position="139"/>
    </location>
</feature>
<sequence>MRVMGLDVGSKTVGVAISDPLGFTAQGVEIIKINEEAKEFGFDRLGELVKEYQVDKFVVGLPKNMNNTEGPRVEASKAYGDKIKEIFNLPVDYQDERLTTVQAERMLVEQADVSRGKRKKVIDKLAAQLILQNYLDRMF</sequence>
<name>YQGF_STRT2</name>
<gene>
    <name type="ordered locus">stu1960</name>
</gene>
<organism>
    <name type="scientific">Streptococcus thermophilus (strain ATCC BAA-250 / LMG 18311)</name>
    <dbReference type="NCBI Taxonomy" id="264199"/>
    <lineage>
        <taxon>Bacteria</taxon>
        <taxon>Bacillati</taxon>
        <taxon>Bacillota</taxon>
        <taxon>Bacilli</taxon>
        <taxon>Lactobacillales</taxon>
        <taxon>Streptococcaceae</taxon>
        <taxon>Streptococcus</taxon>
    </lineage>
</organism>
<dbReference type="EC" id="3.1.-.-" evidence="1"/>
<dbReference type="EMBL" id="CP000023">
    <property type="protein sequence ID" value="AAV61554.1"/>
    <property type="molecule type" value="Genomic_DNA"/>
</dbReference>
<dbReference type="SMR" id="Q5M292"/>
<dbReference type="STRING" id="264199.stu1960"/>
<dbReference type="KEGG" id="stl:stu1960"/>
<dbReference type="eggNOG" id="COG0816">
    <property type="taxonomic scope" value="Bacteria"/>
</dbReference>
<dbReference type="HOGENOM" id="CLU_098240_2_0_9"/>
<dbReference type="Proteomes" id="UP000001170">
    <property type="component" value="Chromosome"/>
</dbReference>
<dbReference type="GO" id="GO:0005829">
    <property type="term" value="C:cytosol"/>
    <property type="evidence" value="ECO:0007669"/>
    <property type="project" value="TreeGrafter"/>
</dbReference>
<dbReference type="GO" id="GO:0004518">
    <property type="term" value="F:nuclease activity"/>
    <property type="evidence" value="ECO:0007669"/>
    <property type="project" value="UniProtKB-KW"/>
</dbReference>
<dbReference type="GO" id="GO:0000967">
    <property type="term" value="P:rRNA 5'-end processing"/>
    <property type="evidence" value="ECO:0007669"/>
    <property type="project" value="UniProtKB-UniRule"/>
</dbReference>
<dbReference type="CDD" id="cd16964">
    <property type="entry name" value="YqgF"/>
    <property type="match status" value="1"/>
</dbReference>
<dbReference type="FunFam" id="3.30.420.140:FF:000003">
    <property type="entry name" value="Putative pre-16S rRNA nuclease"/>
    <property type="match status" value="1"/>
</dbReference>
<dbReference type="Gene3D" id="3.30.420.140">
    <property type="entry name" value="YqgF/RNase H-like domain"/>
    <property type="match status" value="1"/>
</dbReference>
<dbReference type="HAMAP" id="MF_00651">
    <property type="entry name" value="Nuclease_YqgF"/>
    <property type="match status" value="1"/>
</dbReference>
<dbReference type="InterPro" id="IPR012337">
    <property type="entry name" value="RNaseH-like_sf"/>
</dbReference>
<dbReference type="InterPro" id="IPR005227">
    <property type="entry name" value="YqgF"/>
</dbReference>
<dbReference type="InterPro" id="IPR006641">
    <property type="entry name" value="YqgF/RNaseH-like_dom"/>
</dbReference>
<dbReference type="InterPro" id="IPR037027">
    <property type="entry name" value="YqgF/RNaseH-like_dom_sf"/>
</dbReference>
<dbReference type="NCBIfam" id="TIGR00250">
    <property type="entry name" value="RNAse_H_YqgF"/>
    <property type="match status" value="1"/>
</dbReference>
<dbReference type="PANTHER" id="PTHR33317">
    <property type="entry name" value="POLYNUCLEOTIDYL TRANSFERASE, RIBONUCLEASE H-LIKE SUPERFAMILY PROTEIN"/>
    <property type="match status" value="1"/>
</dbReference>
<dbReference type="PANTHER" id="PTHR33317:SF4">
    <property type="entry name" value="POLYNUCLEOTIDYL TRANSFERASE, RIBONUCLEASE H-LIKE SUPERFAMILY PROTEIN"/>
    <property type="match status" value="1"/>
</dbReference>
<dbReference type="Pfam" id="PF03652">
    <property type="entry name" value="RuvX"/>
    <property type="match status" value="1"/>
</dbReference>
<dbReference type="SMART" id="SM00732">
    <property type="entry name" value="YqgFc"/>
    <property type="match status" value="1"/>
</dbReference>
<dbReference type="SUPFAM" id="SSF53098">
    <property type="entry name" value="Ribonuclease H-like"/>
    <property type="match status" value="1"/>
</dbReference>